<gene>
    <name evidence="1" type="primary">mtgA</name>
    <name type="ordered locus">Bamb_0515</name>
</gene>
<dbReference type="EC" id="2.4.99.28" evidence="1"/>
<dbReference type="EMBL" id="CP000440">
    <property type="protein sequence ID" value="ABI86074.1"/>
    <property type="molecule type" value="Genomic_DNA"/>
</dbReference>
<dbReference type="RefSeq" id="WP_011655928.1">
    <property type="nucleotide sequence ID" value="NC_008390.1"/>
</dbReference>
<dbReference type="SMR" id="Q0BIE9"/>
<dbReference type="GeneID" id="93084069"/>
<dbReference type="KEGG" id="bam:Bamb_0515"/>
<dbReference type="PATRIC" id="fig|339670.21.peg.1090"/>
<dbReference type="eggNOG" id="COG0744">
    <property type="taxonomic scope" value="Bacteria"/>
</dbReference>
<dbReference type="UniPathway" id="UPA00219"/>
<dbReference type="Proteomes" id="UP000000662">
    <property type="component" value="Chromosome 1"/>
</dbReference>
<dbReference type="GO" id="GO:0009274">
    <property type="term" value="C:peptidoglycan-based cell wall"/>
    <property type="evidence" value="ECO:0007669"/>
    <property type="project" value="InterPro"/>
</dbReference>
<dbReference type="GO" id="GO:0005886">
    <property type="term" value="C:plasma membrane"/>
    <property type="evidence" value="ECO:0007669"/>
    <property type="project" value="UniProtKB-SubCell"/>
</dbReference>
<dbReference type="GO" id="GO:0016763">
    <property type="term" value="F:pentosyltransferase activity"/>
    <property type="evidence" value="ECO:0007669"/>
    <property type="project" value="InterPro"/>
</dbReference>
<dbReference type="GO" id="GO:0008955">
    <property type="term" value="F:peptidoglycan glycosyltransferase activity"/>
    <property type="evidence" value="ECO:0007669"/>
    <property type="project" value="UniProtKB-UniRule"/>
</dbReference>
<dbReference type="GO" id="GO:0071555">
    <property type="term" value="P:cell wall organization"/>
    <property type="evidence" value="ECO:0007669"/>
    <property type="project" value="UniProtKB-KW"/>
</dbReference>
<dbReference type="GO" id="GO:0009252">
    <property type="term" value="P:peptidoglycan biosynthetic process"/>
    <property type="evidence" value="ECO:0007669"/>
    <property type="project" value="UniProtKB-UniRule"/>
</dbReference>
<dbReference type="GO" id="GO:0008360">
    <property type="term" value="P:regulation of cell shape"/>
    <property type="evidence" value="ECO:0007669"/>
    <property type="project" value="UniProtKB-KW"/>
</dbReference>
<dbReference type="Gene3D" id="1.10.3810.10">
    <property type="entry name" value="Biosynthetic peptidoglycan transglycosylase-like"/>
    <property type="match status" value="1"/>
</dbReference>
<dbReference type="HAMAP" id="MF_00766">
    <property type="entry name" value="PGT_MtgA"/>
    <property type="match status" value="1"/>
</dbReference>
<dbReference type="InterPro" id="IPR001264">
    <property type="entry name" value="Glyco_trans_51"/>
</dbReference>
<dbReference type="InterPro" id="IPR023346">
    <property type="entry name" value="Lysozyme-like_dom_sf"/>
</dbReference>
<dbReference type="InterPro" id="IPR036950">
    <property type="entry name" value="PBP_transglycosylase"/>
</dbReference>
<dbReference type="InterPro" id="IPR011812">
    <property type="entry name" value="Pep_trsgly"/>
</dbReference>
<dbReference type="NCBIfam" id="TIGR02070">
    <property type="entry name" value="mono_pep_trsgly"/>
    <property type="match status" value="1"/>
</dbReference>
<dbReference type="PANTHER" id="PTHR30400:SF0">
    <property type="entry name" value="BIOSYNTHETIC PEPTIDOGLYCAN TRANSGLYCOSYLASE"/>
    <property type="match status" value="1"/>
</dbReference>
<dbReference type="PANTHER" id="PTHR30400">
    <property type="entry name" value="MONOFUNCTIONAL BIOSYNTHETIC PEPTIDOGLYCAN TRANSGLYCOSYLASE"/>
    <property type="match status" value="1"/>
</dbReference>
<dbReference type="Pfam" id="PF00912">
    <property type="entry name" value="Transgly"/>
    <property type="match status" value="1"/>
</dbReference>
<dbReference type="SUPFAM" id="SSF53955">
    <property type="entry name" value="Lysozyme-like"/>
    <property type="match status" value="1"/>
</dbReference>
<organism>
    <name type="scientific">Burkholderia ambifaria (strain ATCC BAA-244 / DSM 16087 / CCUG 44356 / LMG 19182 / AMMD)</name>
    <name type="common">Burkholderia cepacia (strain AMMD)</name>
    <dbReference type="NCBI Taxonomy" id="339670"/>
    <lineage>
        <taxon>Bacteria</taxon>
        <taxon>Pseudomonadati</taxon>
        <taxon>Pseudomonadota</taxon>
        <taxon>Betaproteobacteria</taxon>
        <taxon>Burkholderiales</taxon>
        <taxon>Burkholderiaceae</taxon>
        <taxon>Burkholderia</taxon>
        <taxon>Burkholderia cepacia complex</taxon>
    </lineage>
</organism>
<protein>
    <recommendedName>
        <fullName evidence="1">Biosynthetic peptidoglycan transglycosylase</fullName>
        <ecNumber evidence="1">2.4.99.28</ecNumber>
    </recommendedName>
    <alternativeName>
        <fullName evidence="1">Glycan polymerase</fullName>
    </alternativeName>
    <alternativeName>
        <fullName evidence="1">Peptidoglycan glycosyltransferase MtgA</fullName>
        <shortName evidence="1">PGT</shortName>
    </alternativeName>
</protein>
<proteinExistence type="inferred from homology"/>
<comment type="function">
    <text evidence="1">Peptidoglycan polymerase that catalyzes glycan chain elongation from lipid-linked precursors.</text>
</comment>
<comment type="catalytic activity">
    <reaction evidence="1">
        <text>[GlcNAc-(1-&gt;4)-Mur2Ac(oyl-L-Ala-gamma-D-Glu-L-Lys-D-Ala-D-Ala)](n)-di-trans,octa-cis-undecaprenyl diphosphate + beta-D-GlcNAc-(1-&gt;4)-Mur2Ac(oyl-L-Ala-gamma-D-Glu-L-Lys-D-Ala-D-Ala)-di-trans,octa-cis-undecaprenyl diphosphate = [GlcNAc-(1-&gt;4)-Mur2Ac(oyl-L-Ala-gamma-D-Glu-L-Lys-D-Ala-D-Ala)](n+1)-di-trans,octa-cis-undecaprenyl diphosphate + di-trans,octa-cis-undecaprenyl diphosphate + H(+)</text>
        <dbReference type="Rhea" id="RHEA:23708"/>
        <dbReference type="Rhea" id="RHEA-COMP:9602"/>
        <dbReference type="Rhea" id="RHEA-COMP:9603"/>
        <dbReference type="ChEBI" id="CHEBI:15378"/>
        <dbReference type="ChEBI" id="CHEBI:58405"/>
        <dbReference type="ChEBI" id="CHEBI:60033"/>
        <dbReference type="ChEBI" id="CHEBI:78435"/>
        <dbReference type="EC" id="2.4.99.28"/>
    </reaction>
</comment>
<comment type="pathway">
    <text evidence="1">Cell wall biogenesis; peptidoglycan biosynthesis.</text>
</comment>
<comment type="subcellular location">
    <subcellularLocation>
        <location evidence="1">Cell inner membrane</location>
        <topology evidence="1">Single-pass membrane protein</topology>
    </subcellularLocation>
</comment>
<comment type="similarity">
    <text evidence="1">Belongs to the glycosyltransferase 51 family.</text>
</comment>
<name>MTGA_BURCM</name>
<sequence length="245" mass="27882">MAAVSGMRRTRTVSPTRWIVYAGSVFAGAWLATQLFYLVQIALWSFINPGSTAFMRTDAWWLSRDKPPAQVQHQWVPYDQISRNLKRALIASEDSTFATNNGYDVDAILQAWEKNKARGRIVAGGSTITQQLARNLFLSREKSYIRKGQELIITWMLETVLDKERIFEIYLNSVEWGRGVYGAEAAARYYYRIPASRLGAWQSARLAVMLPKPRWFDAHRGSAYQAQRAAVIARRMGAAELPQSQ</sequence>
<evidence type="ECO:0000255" key="1">
    <source>
        <dbReference type="HAMAP-Rule" id="MF_00766"/>
    </source>
</evidence>
<feature type="chain" id="PRO_1000017301" description="Biosynthetic peptidoglycan transglycosylase">
    <location>
        <begin position="1"/>
        <end position="245"/>
    </location>
</feature>
<feature type="transmembrane region" description="Helical" evidence="1">
    <location>
        <begin position="20"/>
        <end position="42"/>
    </location>
</feature>
<accession>Q0BIE9</accession>
<keyword id="KW-0997">Cell inner membrane</keyword>
<keyword id="KW-1003">Cell membrane</keyword>
<keyword id="KW-0133">Cell shape</keyword>
<keyword id="KW-0961">Cell wall biogenesis/degradation</keyword>
<keyword id="KW-0328">Glycosyltransferase</keyword>
<keyword id="KW-0472">Membrane</keyword>
<keyword id="KW-0573">Peptidoglycan synthesis</keyword>
<keyword id="KW-0808">Transferase</keyword>
<keyword id="KW-0812">Transmembrane</keyword>
<keyword id="KW-1133">Transmembrane helix</keyword>
<reference key="1">
    <citation type="submission" date="2006-08" db="EMBL/GenBank/DDBJ databases">
        <title>Complete sequence of chromosome 1 of Burkholderia cepacia AMMD.</title>
        <authorList>
            <person name="Copeland A."/>
            <person name="Lucas S."/>
            <person name="Lapidus A."/>
            <person name="Barry K."/>
            <person name="Detter J.C."/>
            <person name="Glavina del Rio T."/>
            <person name="Hammon N."/>
            <person name="Israni S."/>
            <person name="Pitluck S."/>
            <person name="Bruce D."/>
            <person name="Chain P."/>
            <person name="Malfatti S."/>
            <person name="Shin M."/>
            <person name="Vergez L."/>
            <person name="Schmutz J."/>
            <person name="Larimer F."/>
            <person name="Land M."/>
            <person name="Hauser L."/>
            <person name="Kyrpides N."/>
            <person name="Kim E."/>
            <person name="Parke J."/>
            <person name="Coenye T."/>
            <person name="Konstantinidis K."/>
            <person name="Ramette A."/>
            <person name="Tiedje J."/>
            <person name="Richardson P."/>
        </authorList>
    </citation>
    <scope>NUCLEOTIDE SEQUENCE [LARGE SCALE GENOMIC DNA]</scope>
    <source>
        <strain>ATCC BAA-244 / DSM 16087 / CCUG 44356 / LMG 19182 / AMMD</strain>
    </source>
</reference>